<name>RHAR_MANSM</name>
<dbReference type="EMBL" id="AE016827">
    <property type="protein sequence ID" value="AAU38930.1"/>
    <property type="molecule type" value="Genomic_DNA"/>
</dbReference>
<dbReference type="RefSeq" id="WP_011201468.1">
    <property type="nucleotide sequence ID" value="NC_006300.1"/>
</dbReference>
<dbReference type="SMR" id="Q65Q30"/>
<dbReference type="STRING" id="221988.MS2323"/>
<dbReference type="KEGG" id="msu:MS2323"/>
<dbReference type="eggNOG" id="COG4977">
    <property type="taxonomic scope" value="Bacteria"/>
</dbReference>
<dbReference type="HOGENOM" id="CLU_000445_88_5_6"/>
<dbReference type="OrthoDB" id="2547276at2"/>
<dbReference type="Proteomes" id="UP000000607">
    <property type="component" value="Chromosome"/>
</dbReference>
<dbReference type="GO" id="GO:0005737">
    <property type="term" value="C:cytoplasm"/>
    <property type="evidence" value="ECO:0007669"/>
    <property type="project" value="UniProtKB-SubCell"/>
</dbReference>
<dbReference type="GO" id="GO:0003700">
    <property type="term" value="F:DNA-binding transcription factor activity"/>
    <property type="evidence" value="ECO:0007669"/>
    <property type="project" value="UniProtKB-UniRule"/>
</dbReference>
<dbReference type="GO" id="GO:0043565">
    <property type="term" value="F:sequence-specific DNA binding"/>
    <property type="evidence" value="ECO:0007669"/>
    <property type="project" value="InterPro"/>
</dbReference>
<dbReference type="GO" id="GO:0045893">
    <property type="term" value="P:positive regulation of DNA-templated transcription"/>
    <property type="evidence" value="ECO:0007669"/>
    <property type="project" value="UniProtKB-UniRule"/>
</dbReference>
<dbReference type="GO" id="GO:0019299">
    <property type="term" value="P:rhamnose metabolic process"/>
    <property type="evidence" value="ECO:0007669"/>
    <property type="project" value="UniProtKB-UniRule"/>
</dbReference>
<dbReference type="CDD" id="cd06977">
    <property type="entry name" value="cupin_RhaR_RhaS-like_N"/>
    <property type="match status" value="1"/>
</dbReference>
<dbReference type="Gene3D" id="1.10.10.60">
    <property type="entry name" value="Homeodomain-like"/>
    <property type="match status" value="2"/>
</dbReference>
<dbReference type="Gene3D" id="2.60.120.10">
    <property type="entry name" value="Jelly Rolls"/>
    <property type="match status" value="1"/>
</dbReference>
<dbReference type="HAMAP" id="MF_01533">
    <property type="entry name" value="HTH_type_RhaR"/>
    <property type="match status" value="1"/>
</dbReference>
<dbReference type="InterPro" id="IPR003313">
    <property type="entry name" value="AraC-bd"/>
</dbReference>
<dbReference type="InterPro" id="IPR009057">
    <property type="entry name" value="Homeodomain-like_sf"/>
</dbReference>
<dbReference type="InterPro" id="IPR037923">
    <property type="entry name" value="HTH-like"/>
</dbReference>
<dbReference type="InterPro" id="IPR018060">
    <property type="entry name" value="HTH_AraC"/>
</dbReference>
<dbReference type="InterPro" id="IPR018062">
    <property type="entry name" value="HTH_AraC-typ_CS"/>
</dbReference>
<dbReference type="InterPro" id="IPR047220">
    <property type="entry name" value="RhaR_RhaS-like_N"/>
</dbReference>
<dbReference type="InterPro" id="IPR014710">
    <property type="entry name" value="RmlC-like_jellyroll"/>
</dbReference>
<dbReference type="InterPro" id="IPR023699">
    <property type="entry name" value="Tscrpt_act_RhaR"/>
</dbReference>
<dbReference type="InterPro" id="IPR020449">
    <property type="entry name" value="Tscrpt_reg_AraC-type_HTH"/>
</dbReference>
<dbReference type="PANTHER" id="PTHR43280">
    <property type="entry name" value="ARAC-FAMILY TRANSCRIPTIONAL REGULATOR"/>
    <property type="match status" value="1"/>
</dbReference>
<dbReference type="PANTHER" id="PTHR43280:SF13">
    <property type="entry name" value="HTH-TYPE TRANSCRIPTIONAL ACTIVATOR RHAR"/>
    <property type="match status" value="1"/>
</dbReference>
<dbReference type="Pfam" id="PF02311">
    <property type="entry name" value="AraC_binding"/>
    <property type="match status" value="1"/>
</dbReference>
<dbReference type="Pfam" id="PF12833">
    <property type="entry name" value="HTH_18"/>
    <property type="match status" value="1"/>
</dbReference>
<dbReference type="PRINTS" id="PR00032">
    <property type="entry name" value="HTHARAC"/>
</dbReference>
<dbReference type="SMART" id="SM00342">
    <property type="entry name" value="HTH_ARAC"/>
    <property type="match status" value="1"/>
</dbReference>
<dbReference type="SUPFAM" id="SSF46689">
    <property type="entry name" value="Homeodomain-like"/>
    <property type="match status" value="1"/>
</dbReference>
<dbReference type="SUPFAM" id="SSF51215">
    <property type="entry name" value="Regulatory protein AraC"/>
    <property type="match status" value="1"/>
</dbReference>
<dbReference type="PROSITE" id="PS00041">
    <property type="entry name" value="HTH_ARAC_FAMILY_1"/>
    <property type="match status" value="1"/>
</dbReference>
<dbReference type="PROSITE" id="PS01124">
    <property type="entry name" value="HTH_ARAC_FAMILY_2"/>
    <property type="match status" value="1"/>
</dbReference>
<gene>
    <name evidence="1" type="primary">rhaR</name>
    <name type="ordered locus">MS2323</name>
</gene>
<comment type="function">
    <text evidence="1">Activates expression of the rhaSR operon in response to L-rhamnose.</text>
</comment>
<comment type="subunit">
    <text evidence="1">Binds DNA as a dimer.</text>
</comment>
<comment type="subcellular location">
    <subcellularLocation>
        <location evidence="1">Cytoplasm</location>
    </subcellularLocation>
</comment>
<accession>Q65Q30</accession>
<sequence length="276" mass="32114">MTDILQLSHHSYFISEESPITVERRHYQPPFPLHRHDFNEIVIISAGNGIHFWNDEIHPITTGNVLYIESGDKHKYGEVDKLKLDNILYRPEKLSLFPIMKDYIPHNNEKKSLRINQETLVQLQSLISQLEIESKKTNKSSMHLSEAIFLQILILICRTQQQENKAYSDISKLESLFSALNQSISQEFYLADFCRQHQLAVSSVRRIFKQQTNMTIAQYLQKLRLCRAATLLRNTSESVANIAIRCGYSDSNYFSSVFGKTFSCTPTEYRSRFIKK</sequence>
<protein>
    <recommendedName>
        <fullName evidence="1">HTH-type transcriptional activator RhaR</fullName>
    </recommendedName>
    <alternativeName>
        <fullName evidence="1">L-rhamnose operon transcriptional activator RhaR</fullName>
    </alternativeName>
</protein>
<reference key="1">
    <citation type="journal article" date="2004" name="Nat. Biotechnol.">
        <title>The genome sequence of the capnophilic rumen bacterium Mannheimia succiniciproducens.</title>
        <authorList>
            <person name="Hong S.H."/>
            <person name="Kim J.S."/>
            <person name="Lee S.Y."/>
            <person name="In Y.H."/>
            <person name="Choi S.S."/>
            <person name="Rih J.-K."/>
            <person name="Kim C.H."/>
            <person name="Jeong H."/>
            <person name="Hur C.G."/>
            <person name="Kim J.J."/>
        </authorList>
    </citation>
    <scope>NUCLEOTIDE SEQUENCE [LARGE SCALE GENOMIC DNA]</scope>
    <source>
        <strain>KCTC 0769BP / MBEL55E</strain>
    </source>
</reference>
<evidence type="ECO:0000255" key="1">
    <source>
        <dbReference type="HAMAP-Rule" id="MF_01533"/>
    </source>
</evidence>
<keyword id="KW-0010">Activator</keyword>
<keyword id="KW-0963">Cytoplasm</keyword>
<keyword id="KW-0238">DNA-binding</keyword>
<keyword id="KW-0677">Repeat</keyword>
<keyword id="KW-0684">Rhamnose metabolism</keyword>
<keyword id="KW-0804">Transcription</keyword>
<keyword id="KW-0805">Transcription regulation</keyword>
<feature type="chain" id="PRO_0000194555" description="HTH-type transcriptional activator RhaR">
    <location>
        <begin position="1"/>
        <end position="276"/>
    </location>
</feature>
<feature type="domain" description="HTH araC/xylS-type" evidence="1">
    <location>
        <begin position="174"/>
        <end position="272"/>
    </location>
</feature>
<feature type="DNA-binding region" description="H-T-H motif" evidence="1">
    <location>
        <begin position="191"/>
        <end position="212"/>
    </location>
</feature>
<feature type="DNA-binding region" description="H-T-H motif" evidence="1">
    <location>
        <begin position="239"/>
        <end position="262"/>
    </location>
</feature>
<proteinExistence type="inferred from homology"/>
<organism>
    <name type="scientific">Mannheimia succiniciproducens (strain KCTC 0769BP / MBEL55E)</name>
    <dbReference type="NCBI Taxonomy" id="221988"/>
    <lineage>
        <taxon>Bacteria</taxon>
        <taxon>Pseudomonadati</taxon>
        <taxon>Pseudomonadota</taxon>
        <taxon>Gammaproteobacteria</taxon>
        <taxon>Pasteurellales</taxon>
        <taxon>Pasteurellaceae</taxon>
        <taxon>Basfia</taxon>
    </lineage>
</organism>